<feature type="chain" id="PRO_0000051710" description="Cytochrome P450 2C21">
    <location>
        <begin position="1" status="less than"/>
        <end position="487"/>
    </location>
</feature>
<feature type="binding site" description="axial binding residue" evidence="1">
    <location>
        <position position="432"/>
    </location>
    <ligand>
        <name>heme</name>
        <dbReference type="ChEBI" id="CHEBI:30413"/>
    </ligand>
    <ligandPart>
        <name>Fe</name>
        <dbReference type="ChEBI" id="CHEBI:18248"/>
    </ligandPart>
</feature>
<feature type="sequence conflict" description="In Ref. 2; no nucleotide entry." evidence="2" ref="2">
    <location>
        <begin position="337"/>
        <end position="342"/>
    </location>
</feature>
<feature type="non-terminal residue">
    <location>
        <position position="1"/>
    </location>
</feature>
<name>CP2CL_CANLF</name>
<proteinExistence type="evidence at transcript level"/>
<accession>P56594</accession>
<accession>O62734</accession>
<comment type="function">
    <text>Cytochromes P450 are a group of heme-thiolate monooxygenases. In liver microsomes, this enzyme is involved in an NADPH-dependent electron transport pathway. It oxidizes a variety of structurally unrelated compounds, including steroids, fatty acids, and xenobiotics. Showed testosterone hydrolase activity.</text>
</comment>
<comment type="catalytic activity">
    <reaction>
        <text>an organic molecule + reduced [NADPH--hemoprotein reductase] + O2 = an alcohol + oxidized [NADPH--hemoprotein reductase] + H2O + H(+)</text>
        <dbReference type="Rhea" id="RHEA:17149"/>
        <dbReference type="Rhea" id="RHEA-COMP:11964"/>
        <dbReference type="Rhea" id="RHEA-COMP:11965"/>
        <dbReference type="ChEBI" id="CHEBI:15377"/>
        <dbReference type="ChEBI" id="CHEBI:15378"/>
        <dbReference type="ChEBI" id="CHEBI:15379"/>
        <dbReference type="ChEBI" id="CHEBI:30879"/>
        <dbReference type="ChEBI" id="CHEBI:57618"/>
        <dbReference type="ChEBI" id="CHEBI:58210"/>
        <dbReference type="ChEBI" id="CHEBI:142491"/>
        <dbReference type="EC" id="1.14.14.1"/>
    </reaction>
</comment>
<comment type="cofactor">
    <cofactor evidence="1">
        <name>heme</name>
        <dbReference type="ChEBI" id="CHEBI:30413"/>
    </cofactor>
</comment>
<comment type="subcellular location">
    <subcellularLocation>
        <location>Endoplasmic reticulum membrane</location>
        <topology>Peripheral membrane protein</topology>
    </subcellularLocation>
    <subcellularLocation>
        <location>Microsome membrane</location>
        <topology>Peripheral membrane protein</topology>
    </subcellularLocation>
</comment>
<comment type="tissue specificity">
    <text>Liver.</text>
</comment>
<comment type="similarity">
    <text evidence="2">Belongs to the cytochrome P450 family.</text>
</comment>
<keyword id="KW-0256">Endoplasmic reticulum</keyword>
<keyword id="KW-0349">Heme</keyword>
<keyword id="KW-0408">Iron</keyword>
<keyword id="KW-0472">Membrane</keyword>
<keyword id="KW-0479">Metal-binding</keyword>
<keyword id="KW-0492">Microsome</keyword>
<keyword id="KW-0503">Monooxygenase</keyword>
<keyword id="KW-0560">Oxidoreductase</keyword>
<keyword id="KW-1185">Reference proteome</keyword>
<evidence type="ECO:0000250" key="1"/>
<evidence type="ECO:0000305" key="2"/>
<sequence length="487" mass="55531">FIVLVICLSCLISFFLWNQNRAKGKLPPGPTPLPIIGNILQINTKNVSKSLSKLAENYGPVFTVYFGMKPTVVLYGYEAVKEALIDRSEEFSGRGHFPLLDWTIQGLGIVFSNGEKWKQTRRFSLTVLRNMGMGKKTVEDRIQEEALYLVEALKKTNASPCDPTFLLGCAPCNVICSIIFQNRFEYDDKDFLTLLEYFHENLLISSTSWIQLYNAFPLLIHYLPGSHHVLFKNIANQFKFISEKIKEHEESLNFSNPRDFIDYFLIKIEKEKHNKQSEFTMDNLIITIWDVFSAGTETTSTTLRYGLLVLLKHPDVTAKVQEEIHRVVGRHRSPCMQDRSCMPYTDAVVHEIQRYIDLVPNNLPHSVTQDIKFREYLIPKGTTILTSLTSVLHDEKGFPNPDQFDPGHFLDENGSFKKSDYFMAFSAGKRVCVGEGLARMELFLLLTNILQHFTLKPLVDPKDIDTTPIANGLGATPPSYKLCFVPV</sequence>
<dbReference type="EC" id="1.14.14.1"/>
<dbReference type="EMBL" id="AF049909">
    <property type="protein sequence ID" value="AAC05209.1"/>
    <property type="molecule type" value="mRNA"/>
</dbReference>
<dbReference type="SMR" id="P56594"/>
<dbReference type="FunCoup" id="P56594">
    <property type="interactions" value="49"/>
</dbReference>
<dbReference type="STRING" id="9615.ENSCAFP00000011937"/>
<dbReference type="PaxDb" id="9612-ENSCAFP00000011937"/>
<dbReference type="eggNOG" id="KOG0156">
    <property type="taxonomic scope" value="Eukaryota"/>
</dbReference>
<dbReference type="InParanoid" id="P56594"/>
<dbReference type="Proteomes" id="UP000002254">
    <property type="component" value="Unplaced"/>
</dbReference>
<dbReference type="Proteomes" id="UP000694429">
    <property type="component" value="Unplaced"/>
</dbReference>
<dbReference type="Proteomes" id="UP000694542">
    <property type="component" value="Unplaced"/>
</dbReference>
<dbReference type="Proteomes" id="UP000805418">
    <property type="component" value="Unplaced"/>
</dbReference>
<dbReference type="GO" id="GO:0005737">
    <property type="term" value="C:cytoplasm"/>
    <property type="evidence" value="ECO:0000318"/>
    <property type="project" value="GO_Central"/>
</dbReference>
<dbReference type="GO" id="GO:0005789">
    <property type="term" value="C:endoplasmic reticulum membrane"/>
    <property type="evidence" value="ECO:0007669"/>
    <property type="project" value="UniProtKB-SubCell"/>
</dbReference>
<dbReference type="GO" id="GO:0043231">
    <property type="term" value="C:intracellular membrane-bounded organelle"/>
    <property type="evidence" value="ECO:0000318"/>
    <property type="project" value="GO_Central"/>
</dbReference>
<dbReference type="GO" id="GO:0020037">
    <property type="term" value="F:heme binding"/>
    <property type="evidence" value="ECO:0000318"/>
    <property type="project" value="GO_Central"/>
</dbReference>
<dbReference type="GO" id="GO:0005506">
    <property type="term" value="F:iron ion binding"/>
    <property type="evidence" value="ECO:0007669"/>
    <property type="project" value="InterPro"/>
</dbReference>
<dbReference type="GO" id="GO:0016712">
    <property type="term" value="F:oxidoreductase activity, acting on paired donors, with incorporation or reduction of molecular oxygen, reduced flavin or flavoprotein as one donor, and incorporation of one atom of oxygen"/>
    <property type="evidence" value="ECO:0000318"/>
    <property type="project" value="GO_Central"/>
</dbReference>
<dbReference type="GO" id="GO:0006082">
    <property type="term" value="P:organic acid metabolic process"/>
    <property type="evidence" value="ECO:0000318"/>
    <property type="project" value="GO_Central"/>
</dbReference>
<dbReference type="GO" id="GO:0006805">
    <property type="term" value="P:xenobiotic metabolic process"/>
    <property type="evidence" value="ECO:0000318"/>
    <property type="project" value="GO_Central"/>
</dbReference>
<dbReference type="CDD" id="cd20665">
    <property type="entry name" value="CYP2C-like"/>
    <property type="match status" value="1"/>
</dbReference>
<dbReference type="FunFam" id="1.10.630.10:FF:000299">
    <property type="entry name" value="Cytochrome P450 2C9"/>
    <property type="match status" value="1"/>
</dbReference>
<dbReference type="Gene3D" id="1.10.630.10">
    <property type="entry name" value="Cytochrome P450"/>
    <property type="match status" value="1"/>
</dbReference>
<dbReference type="InterPro" id="IPR001128">
    <property type="entry name" value="Cyt_P450"/>
</dbReference>
<dbReference type="InterPro" id="IPR017972">
    <property type="entry name" value="Cyt_P450_CS"/>
</dbReference>
<dbReference type="InterPro" id="IPR002401">
    <property type="entry name" value="Cyt_P450_E_grp-I"/>
</dbReference>
<dbReference type="InterPro" id="IPR036396">
    <property type="entry name" value="Cyt_P450_sf"/>
</dbReference>
<dbReference type="InterPro" id="IPR050182">
    <property type="entry name" value="Cytochrome_P450_fam2"/>
</dbReference>
<dbReference type="PANTHER" id="PTHR24300:SF200">
    <property type="entry name" value="CYTOCHROME P450 2C70"/>
    <property type="match status" value="1"/>
</dbReference>
<dbReference type="PANTHER" id="PTHR24300">
    <property type="entry name" value="CYTOCHROME P450 508A4-RELATED"/>
    <property type="match status" value="1"/>
</dbReference>
<dbReference type="Pfam" id="PF00067">
    <property type="entry name" value="p450"/>
    <property type="match status" value="1"/>
</dbReference>
<dbReference type="PRINTS" id="PR00463">
    <property type="entry name" value="EP450I"/>
</dbReference>
<dbReference type="PRINTS" id="PR00385">
    <property type="entry name" value="P450"/>
</dbReference>
<dbReference type="SUPFAM" id="SSF48264">
    <property type="entry name" value="Cytochrome P450"/>
    <property type="match status" value="1"/>
</dbReference>
<dbReference type="PROSITE" id="PS00086">
    <property type="entry name" value="CYTOCHROME_P450"/>
    <property type="match status" value="1"/>
</dbReference>
<reference key="1">
    <citation type="journal article" date="1998" name="Drug Metab. Dispos.">
        <title>Isolation of a new canine cytochrome P450 cDNA from the cytochrome P450 2C subfamily (CYP2C41) and evidence for polymorphic differences in its expression.</title>
        <authorList>
            <person name="Blaisdell J."/>
            <person name="Goldstein J.A."/>
            <person name="Bai S.A."/>
        </authorList>
    </citation>
    <scope>NUCLEOTIDE SEQUENCE [MRNA]</scope>
    <source>
        <strain>Beagle</strain>
        <tissue>Liver</tissue>
    </source>
</reference>
<reference key="2">
    <citation type="journal article" date="1990" name="Mol. Pharmacol.">
        <title>Isolation of cDNAs coding for three different forms of liver microsomal cytochrome P-450 from polychlorinated biphenyl-treated beagle dogs.</title>
        <authorList>
            <person name="Uchida T."/>
            <person name="Komori M."/>
            <person name="Kitada M."/>
            <person name="Kamataki T."/>
        </authorList>
    </citation>
    <scope>NUCLEOTIDE SEQUENCE [MRNA] OF 25-487</scope>
    <source>
        <strain>Beagle</strain>
        <tissue>Liver</tissue>
    </source>
</reference>
<protein>
    <recommendedName>
        <fullName>Cytochrome P450 2C21</fullName>
        <ecNumber>1.14.14.1</ecNumber>
    </recommendedName>
    <alternativeName>
        <fullName>CYPIIC21</fullName>
    </alternativeName>
    <alternativeName>
        <fullName>Cytochrome P450 DM1-1</fullName>
    </alternativeName>
</protein>
<gene>
    <name type="primary">CYP2C21</name>
</gene>
<organism>
    <name type="scientific">Canis lupus familiaris</name>
    <name type="common">Dog</name>
    <name type="synonym">Canis familiaris</name>
    <dbReference type="NCBI Taxonomy" id="9615"/>
    <lineage>
        <taxon>Eukaryota</taxon>
        <taxon>Metazoa</taxon>
        <taxon>Chordata</taxon>
        <taxon>Craniata</taxon>
        <taxon>Vertebrata</taxon>
        <taxon>Euteleostomi</taxon>
        <taxon>Mammalia</taxon>
        <taxon>Eutheria</taxon>
        <taxon>Laurasiatheria</taxon>
        <taxon>Carnivora</taxon>
        <taxon>Caniformia</taxon>
        <taxon>Canidae</taxon>
        <taxon>Canis</taxon>
    </lineage>
</organism>